<sequence length="251" mass="28305">MVDQEKETTHFGFRTVAKEQKEGMVAEVFHSVAAKYDLMNDLMSFGVHRIWKRFTIDCSGVRRGQRVLDLAGGTGDLTAKFSRLVGEQGEVVLADINESMLRMGREKLRDKGIVGNVSYVQANAEALPFPDNYFDCITISFGLRNVTEKEKALRSMFRVLKPGGRLLVLEFSKPLLEPLSKAYDAYSFHILPKIGELVAQDSESYRYLAESIRMHPDQETLKSMMMDAGFENVTYSNLTGGIVALHRGFKF</sequence>
<protein>
    <recommendedName>
        <fullName evidence="1">Ubiquinone/menaquinone biosynthesis C-methyltransferase UbiE</fullName>
        <ecNumber evidence="1">2.1.1.163</ecNumber>
        <ecNumber evidence="1">2.1.1.201</ecNumber>
    </recommendedName>
    <alternativeName>
        <fullName evidence="1">2-methoxy-6-polyprenyl-1,4-benzoquinol methylase</fullName>
    </alternativeName>
    <alternativeName>
        <fullName evidence="1">Demethylmenaquinone methyltransferase</fullName>
    </alternativeName>
</protein>
<gene>
    <name evidence="1" type="primary">ubiE</name>
    <name type="ordered locus">YE0256</name>
</gene>
<proteinExistence type="inferred from homology"/>
<reference key="1">
    <citation type="journal article" date="2006" name="PLoS Genet.">
        <title>The complete genome sequence and comparative genome analysis of the high pathogenicity Yersinia enterocolitica strain 8081.</title>
        <authorList>
            <person name="Thomson N.R."/>
            <person name="Howard S."/>
            <person name="Wren B.W."/>
            <person name="Holden M.T.G."/>
            <person name="Crossman L."/>
            <person name="Challis G.L."/>
            <person name="Churcher C."/>
            <person name="Mungall K."/>
            <person name="Brooks K."/>
            <person name="Chillingworth T."/>
            <person name="Feltwell T."/>
            <person name="Abdellah Z."/>
            <person name="Hauser H."/>
            <person name="Jagels K."/>
            <person name="Maddison M."/>
            <person name="Moule S."/>
            <person name="Sanders M."/>
            <person name="Whitehead S."/>
            <person name="Quail M.A."/>
            <person name="Dougan G."/>
            <person name="Parkhill J."/>
            <person name="Prentice M.B."/>
        </authorList>
    </citation>
    <scope>NUCLEOTIDE SEQUENCE [LARGE SCALE GENOMIC DNA]</scope>
    <source>
        <strain>NCTC 13174 / 8081</strain>
    </source>
</reference>
<accession>A1JIF2</accession>
<dbReference type="EC" id="2.1.1.163" evidence="1"/>
<dbReference type="EC" id="2.1.1.201" evidence="1"/>
<dbReference type="EMBL" id="AM286415">
    <property type="protein sequence ID" value="CAL10390.1"/>
    <property type="molecule type" value="Genomic_DNA"/>
</dbReference>
<dbReference type="RefSeq" id="WP_005165601.1">
    <property type="nucleotide sequence ID" value="NC_008800.1"/>
</dbReference>
<dbReference type="RefSeq" id="YP_001004641.1">
    <property type="nucleotide sequence ID" value="NC_008800.1"/>
</dbReference>
<dbReference type="SMR" id="A1JIF2"/>
<dbReference type="GeneID" id="31411397"/>
<dbReference type="KEGG" id="yen:YE0256"/>
<dbReference type="PATRIC" id="fig|393305.7.peg.348"/>
<dbReference type="eggNOG" id="COG2226">
    <property type="taxonomic scope" value="Bacteria"/>
</dbReference>
<dbReference type="HOGENOM" id="CLU_037990_0_0_6"/>
<dbReference type="OrthoDB" id="9808140at2"/>
<dbReference type="UniPathway" id="UPA00079">
    <property type="reaction ID" value="UER00169"/>
</dbReference>
<dbReference type="UniPathway" id="UPA00232"/>
<dbReference type="Proteomes" id="UP000000642">
    <property type="component" value="Chromosome"/>
</dbReference>
<dbReference type="GO" id="GO:0008425">
    <property type="term" value="F:2-methoxy-6-polyprenyl-1,4-benzoquinol methyltransferase activity"/>
    <property type="evidence" value="ECO:0007669"/>
    <property type="project" value="UniProtKB-UniRule"/>
</dbReference>
<dbReference type="GO" id="GO:0043770">
    <property type="term" value="F:demethylmenaquinone methyltransferase activity"/>
    <property type="evidence" value="ECO:0007669"/>
    <property type="project" value="UniProtKB-UniRule"/>
</dbReference>
<dbReference type="GO" id="GO:0009060">
    <property type="term" value="P:aerobic respiration"/>
    <property type="evidence" value="ECO:0007669"/>
    <property type="project" value="UniProtKB-UniRule"/>
</dbReference>
<dbReference type="GO" id="GO:0009234">
    <property type="term" value="P:menaquinone biosynthetic process"/>
    <property type="evidence" value="ECO:0007669"/>
    <property type="project" value="UniProtKB-UniRule"/>
</dbReference>
<dbReference type="GO" id="GO:0032259">
    <property type="term" value="P:methylation"/>
    <property type="evidence" value="ECO:0007669"/>
    <property type="project" value="UniProtKB-KW"/>
</dbReference>
<dbReference type="CDD" id="cd02440">
    <property type="entry name" value="AdoMet_MTases"/>
    <property type="match status" value="1"/>
</dbReference>
<dbReference type="FunFam" id="3.40.50.150:FF:000014">
    <property type="entry name" value="Ubiquinone/menaquinone biosynthesis C-methyltransferase UbiE"/>
    <property type="match status" value="1"/>
</dbReference>
<dbReference type="Gene3D" id="3.40.50.150">
    <property type="entry name" value="Vaccinia Virus protein VP39"/>
    <property type="match status" value="1"/>
</dbReference>
<dbReference type="HAMAP" id="MF_01813">
    <property type="entry name" value="MenG_UbiE_methyltr"/>
    <property type="match status" value="1"/>
</dbReference>
<dbReference type="InterPro" id="IPR029063">
    <property type="entry name" value="SAM-dependent_MTases_sf"/>
</dbReference>
<dbReference type="InterPro" id="IPR004033">
    <property type="entry name" value="UbiE/COQ5_MeTrFase"/>
</dbReference>
<dbReference type="InterPro" id="IPR023576">
    <property type="entry name" value="UbiE/COQ5_MeTrFase_CS"/>
</dbReference>
<dbReference type="NCBIfam" id="TIGR01934">
    <property type="entry name" value="MenG_MenH_UbiE"/>
    <property type="match status" value="1"/>
</dbReference>
<dbReference type="NCBIfam" id="NF001240">
    <property type="entry name" value="PRK00216.1-1"/>
    <property type="match status" value="1"/>
</dbReference>
<dbReference type="NCBIfam" id="NF001242">
    <property type="entry name" value="PRK00216.1-3"/>
    <property type="match status" value="1"/>
</dbReference>
<dbReference type="NCBIfam" id="NF001244">
    <property type="entry name" value="PRK00216.1-5"/>
    <property type="match status" value="1"/>
</dbReference>
<dbReference type="PANTHER" id="PTHR43591:SF24">
    <property type="entry name" value="2-METHOXY-6-POLYPRENYL-1,4-BENZOQUINOL METHYLASE, MITOCHONDRIAL"/>
    <property type="match status" value="1"/>
</dbReference>
<dbReference type="PANTHER" id="PTHR43591">
    <property type="entry name" value="METHYLTRANSFERASE"/>
    <property type="match status" value="1"/>
</dbReference>
<dbReference type="Pfam" id="PF01209">
    <property type="entry name" value="Ubie_methyltran"/>
    <property type="match status" value="1"/>
</dbReference>
<dbReference type="SUPFAM" id="SSF53335">
    <property type="entry name" value="S-adenosyl-L-methionine-dependent methyltransferases"/>
    <property type="match status" value="1"/>
</dbReference>
<dbReference type="PROSITE" id="PS51608">
    <property type="entry name" value="SAM_MT_UBIE"/>
    <property type="match status" value="1"/>
</dbReference>
<dbReference type="PROSITE" id="PS01183">
    <property type="entry name" value="UBIE_1"/>
    <property type="match status" value="1"/>
</dbReference>
<dbReference type="PROSITE" id="PS01184">
    <property type="entry name" value="UBIE_2"/>
    <property type="match status" value="1"/>
</dbReference>
<keyword id="KW-0474">Menaquinone biosynthesis</keyword>
<keyword id="KW-0489">Methyltransferase</keyword>
<keyword id="KW-0949">S-adenosyl-L-methionine</keyword>
<keyword id="KW-0808">Transferase</keyword>
<keyword id="KW-0831">Ubiquinone biosynthesis</keyword>
<comment type="function">
    <text evidence="1">Methyltransferase required for the conversion of demethylmenaquinol (DMKH2) to menaquinol (MKH2) and the conversion of 2-polyprenyl-6-methoxy-1,4-benzoquinol (DDMQH2) to 2-polyprenyl-3-methyl-6-methoxy-1,4-benzoquinol (DMQH2).</text>
</comment>
<comment type="catalytic activity">
    <reaction evidence="1">
        <text>a 2-demethylmenaquinol + S-adenosyl-L-methionine = a menaquinol + S-adenosyl-L-homocysteine + H(+)</text>
        <dbReference type="Rhea" id="RHEA:42640"/>
        <dbReference type="Rhea" id="RHEA-COMP:9539"/>
        <dbReference type="Rhea" id="RHEA-COMP:9563"/>
        <dbReference type="ChEBI" id="CHEBI:15378"/>
        <dbReference type="ChEBI" id="CHEBI:18151"/>
        <dbReference type="ChEBI" id="CHEBI:55437"/>
        <dbReference type="ChEBI" id="CHEBI:57856"/>
        <dbReference type="ChEBI" id="CHEBI:59789"/>
        <dbReference type="EC" id="2.1.1.163"/>
    </reaction>
</comment>
<comment type="catalytic activity">
    <reaction evidence="1">
        <text>a 2-methoxy-6-(all-trans-polyprenyl)benzene-1,4-diol + S-adenosyl-L-methionine = a 5-methoxy-2-methyl-3-(all-trans-polyprenyl)benzene-1,4-diol + S-adenosyl-L-homocysteine + H(+)</text>
        <dbReference type="Rhea" id="RHEA:28286"/>
        <dbReference type="Rhea" id="RHEA-COMP:10858"/>
        <dbReference type="Rhea" id="RHEA-COMP:10859"/>
        <dbReference type="ChEBI" id="CHEBI:15378"/>
        <dbReference type="ChEBI" id="CHEBI:57856"/>
        <dbReference type="ChEBI" id="CHEBI:59789"/>
        <dbReference type="ChEBI" id="CHEBI:84166"/>
        <dbReference type="ChEBI" id="CHEBI:84167"/>
        <dbReference type="EC" id="2.1.1.201"/>
    </reaction>
</comment>
<comment type="pathway">
    <text evidence="1">Quinol/quinone metabolism; menaquinone biosynthesis; menaquinol from 1,4-dihydroxy-2-naphthoate: step 2/2.</text>
</comment>
<comment type="pathway">
    <text evidence="1">Cofactor biosynthesis; ubiquinone biosynthesis.</text>
</comment>
<comment type="similarity">
    <text evidence="1">Belongs to the class I-like SAM-binding methyltransferase superfamily. MenG/UbiE family.</text>
</comment>
<organism>
    <name type="scientific">Yersinia enterocolitica serotype O:8 / biotype 1B (strain NCTC 13174 / 8081)</name>
    <dbReference type="NCBI Taxonomy" id="393305"/>
    <lineage>
        <taxon>Bacteria</taxon>
        <taxon>Pseudomonadati</taxon>
        <taxon>Pseudomonadota</taxon>
        <taxon>Gammaproteobacteria</taxon>
        <taxon>Enterobacterales</taxon>
        <taxon>Yersiniaceae</taxon>
        <taxon>Yersinia</taxon>
    </lineage>
</organism>
<evidence type="ECO:0000255" key="1">
    <source>
        <dbReference type="HAMAP-Rule" id="MF_01813"/>
    </source>
</evidence>
<name>UBIE_YERE8</name>
<feature type="chain" id="PRO_1000056316" description="Ubiquinone/menaquinone biosynthesis C-methyltransferase UbiE">
    <location>
        <begin position="1"/>
        <end position="251"/>
    </location>
</feature>
<feature type="binding site" evidence="1">
    <location>
        <position position="74"/>
    </location>
    <ligand>
        <name>S-adenosyl-L-methionine</name>
        <dbReference type="ChEBI" id="CHEBI:59789"/>
    </ligand>
</feature>
<feature type="binding site" evidence="1">
    <location>
        <position position="95"/>
    </location>
    <ligand>
        <name>S-adenosyl-L-methionine</name>
        <dbReference type="ChEBI" id="CHEBI:59789"/>
    </ligand>
</feature>
<feature type="binding site" evidence="1">
    <location>
        <begin position="123"/>
        <end position="124"/>
    </location>
    <ligand>
        <name>S-adenosyl-L-methionine</name>
        <dbReference type="ChEBI" id="CHEBI:59789"/>
    </ligand>
</feature>
<feature type="binding site" evidence="1">
    <location>
        <position position="140"/>
    </location>
    <ligand>
        <name>S-adenosyl-L-methionine</name>
        <dbReference type="ChEBI" id="CHEBI:59789"/>
    </ligand>
</feature>